<name>RL20_THET2</name>
<feature type="chain" id="PRO_0000177249" description="Large ribosomal subunit protein bL20">
    <location>
        <begin position="1"/>
        <end position="118"/>
    </location>
</feature>
<feature type="helix" evidence="3">
    <location>
        <begin position="9"/>
        <end position="20"/>
    </location>
</feature>
<feature type="turn" evidence="3">
    <location>
        <begin position="21"/>
        <end position="23"/>
    </location>
</feature>
<feature type="helix" evidence="3">
    <location>
        <begin position="26"/>
        <end position="29"/>
    </location>
</feature>
<feature type="helix" evidence="3">
    <location>
        <begin position="32"/>
        <end position="72"/>
    </location>
</feature>
<feature type="helix" evidence="3">
    <location>
        <begin position="76"/>
        <end position="85"/>
    </location>
</feature>
<feature type="helix" evidence="3">
    <location>
        <begin position="93"/>
        <end position="99"/>
    </location>
</feature>
<feature type="helix" evidence="3">
    <location>
        <begin position="103"/>
        <end position="117"/>
    </location>
</feature>
<accession>Q72L76</accession>
<reference key="1">
    <citation type="journal article" date="2004" name="Nat. Biotechnol.">
        <title>The genome sequence of the extreme thermophile Thermus thermophilus.</title>
        <authorList>
            <person name="Henne A."/>
            <person name="Brueggemann H."/>
            <person name="Raasch C."/>
            <person name="Wiezer A."/>
            <person name="Hartsch T."/>
            <person name="Liesegang H."/>
            <person name="Johann A."/>
            <person name="Lienard T."/>
            <person name="Gohl O."/>
            <person name="Martinez-Arias R."/>
            <person name="Jacobi C."/>
            <person name="Starkuviene V."/>
            <person name="Schlenczeck S."/>
            <person name="Dencker S."/>
            <person name="Huber R."/>
            <person name="Klenk H.-P."/>
            <person name="Kramer W."/>
            <person name="Merkl R."/>
            <person name="Gottschalk G."/>
            <person name="Fritz H.-J."/>
        </authorList>
    </citation>
    <scope>NUCLEOTIDE SEQUENCE [LARGE SCALE GENOMIC DNA]</scope>
    <source>
        <strain>ATCC BAA-163 / DSM 7039 / HB27</strain>
    </source>
</reference>
<gene>
    <name evidence="1" type="primary">rplT</name>
    <name type="ordered locus">TT_C0185</name>
</gene>
<comment type="function">
    <text evidence="1">Binds directly to 23S ribosomal RNA and is necessary for the in vitro assembly process of the 50S ribosomal subunit. It is not involved in the protein synthesizing functions of that subunit.</text>
</comment>
<comment type="similarity">
    <text evidence="1">Belongs to the bacterial ribosomal protein bL20 family.</text>
</comment>
<dbReference type="EMBL" id="AE017221">
    <property type="protein sequence ID" value="AAS80533.1"/>
    <property type="molecule type" value="Genomic_DNA"/>
</dbReference>
<dbReference type="RefSeq" id="WP_011172639.1">
    <property type="nucleotide sequence ID" value="NC_005835.1"/>
</dbReference>
<dbReference type="PDB" id="4V4I">
    <property type="method" value="X-ray"/>
    <property type="resolution" value="3.71 A"/>
    <property type="chains" value="O=1-118"/>
</dbReference>
<dbReference type="PDB" id="4V4J">
    <property type="method" value="X-ray"/>
    <property type="resolution" value="3.83 A"/>
    <property type="chains" value="O=1-118"/>
</dbReference>
<dbReference type="PDB" id="4V63">
    <property type="method" value="X-ray"/>
    <property type="resolution" value="3.21 A"/>
    <property type="chains" value="BU/DU=1-118"/>
</dbReference>
<dbReference type="PDB" id="4V67">
    <property type="method" value="X-ray"/>
    <property type="resolution" value="3.00 A"/>
    <property type="chains" value="BU/DU=1-118"/>
</dbReference>
<dbReference type="PDB" id="4V7P">
    <property type="method" value="X-ray"/>
    <property type="resolution" value="3.62 A"/>
    <property type="chains" value="BQ/CQ=2-118"/>
</dbReference>
<dbReference type="PDB" id="4V83">
    <property type="method" value="X-ray"/>
    <property type="resolution" value="3.50 A"/>
    <property type="chains" value="BQ/DQ=2-118"/>
</dbReference>
<dbReference type="PDB" id="4V84">
    <property type="method" value="X-ray"/>
    <property type="resolution" value="3.40 A"/>
    <property type="chains" value="BQ/DQ=2-118"/>
</dbReference>
<dbReference type="PDB" id="4V9J">
    <property type="method" value="X-ray"/>
    <property type="resolution" value="3.86 A"/>
    <property type="chains" value="BU/DU=2-118"/>
</dbReference>
<dbReference type="PDB" id="4V9K">
    <property type="method" value="X-ray"/>
    <property type="resolution" value="3.50 A"/>
    <property type="chains" value="BU/DU=2-118"/>
</dbReference>
<dbReference type="PDB" id="4V9L">
    <property type="method" value="X-ray"/>
    <property type="resolution" value="3.50 A"/>
    <property type="chains" value="BU/DU=2-118"/>
</dbReference>
<dbReference type="PDB" id="4V9M">
    <property type="method" value="X-ray"/>
    <property type="resolution" value="4.00 A"/>
    <property type="chains" value="BU/DU=2-118"/>
</dbReference>
<dbReference type="PDB" id="4V9N">
    <property type="method" value="X-ray"/>
    <property type="resolution" value="3.40 A"/>
    <property type="chains" value="BU/DU=2-118"/>
</dbReference>
<dbReference type="PDB" id="4V9Q">
    <property type="method" value="X-ray"/>
    <property type="resolution" value="3.40 A"/>
    <property type="chains" value="AQ/CQ=2-118"/>
</dbReference>
<dbReference type="PDB" id="4W29">
    <property type="method" value="X-ray"/>
    <property type="resolution" value="3.80 A"/>
    <property type="chains" value="BU/DU=2-118"/>
</dbReference>
<dbReference type="PDB" id="4XEJ">
    <property type="method" value="X-ray"/>
    <property type="resolution" value="3.80 A"/>
    <property type="chains" value="AL20/BL20=2-118"/>
</dbReference>
<dbReference type="PDB" id="5J4D">
    <property type="method" value="X-ray"/>
    <property type="resolution" value="3.10 A"/>
    <property type="chains" value="R/WB=1-118"/>
</dbReference>
<dbReference type="PDB" id="5V8I">
    <property type="method" value="X-ray"/>
    <property type="resolution" value="3.25 A"/>
    <property type="chains" value="1U/2U=1-118"/>
</dbReference>
<dbReference type="PDB" id="6B4V">
    <property type="method" value="X-ray"/>
    <property type="resolution" value="3.40 A"/>
    <property type="chains" value="R/VB=1-118"/>
</dbReference>
<dbReference type="PDB" id="6BOH">
    <property type="method" value="X-ray"/>
    <property type="resolution" value="3.40 A"/>
    <property type="chains" value="R/WB=1-118"/>
</dbReference>
<dbReference type="PDB" id="6BOK">
    <property type="method" value="X-ray"/>
    <property type="resolution" value="3.55 A"/>
    <property type="chains" value="R/UB=1-118"/>
</dbReference>
<dbReference type="PDB" id="6N1D">
    <property type="method" value="X-ray"/>
    <property type="resolution" value="3.20 A"/>
    <property type="chains" value="AL20/BL20=1-118"/>
</dbReference>
<dbReference type="PDBsum" id="4V4I"/>
<dbReference type="PDBsum" id="4V4J"/>
<dbReference type="PDBsum" id="4V63"/>
<dbReference type="PDBsum" id="4V67"/>
<dbReference type="PDBsum" id="4V7P"/>
<dbReference type="PDBsum" id="4V83"/>
<dbReference type="PDBsum" id="4V84"/>
<dbReference type="PDBsum" id="4V9J"/>
<dbReference type="PDBsum" id="4V9K"/>
<dbReference type="PDBsum" id="4V9L"/>
<dbReference type="PDBsum" id="4V9M"/>
<dbReference type="PDBsum" id="4V9N"/>
<dbReference type="PDBsum" id="4V9Q"/>
<dbReference type="PDBsum" id="4W29"/>
<dbReference type="PDBsum" id="4XEJ"/>
<dbReference type="PDBsum" id="5J4D"/>
<dbReference type="PDBsum" id="5V8I"/>
<dbReference type="PDBsum" id="6B4V"/>
<dbReference type="PDBsum" id="6BOH"/>
<dbReference type="PDBsum" id="6BOK"/>
<dbReference type="PDBsum" id="6N1D"/>
<dbReference type="SMR" id="Q72L76"/>
<dbReference type="IntAct" id="Q72L76">
    <property type="interactions" value="4"/>
</dbReference>
<dbReference type="GeneID" id="3169980"/>
<dbReference type="KEGG" id="tth:TT_C0185"/>
<dbReference type="eggNOG" id="COG0292">
    <property type="taxonomic scope" value="Bacteria"/>
</dbReference>
<dbReference type="HOGENOM" id="CLU_123265_0_1_0"/>
<dbReference type="OrthoDB" id="9808966at2"/>
<dbReference type="Proteomes" id="UP000000592">
    <property type="component" value="Chromosome"/>
</dbReference>
<dbReference type="GO" id="GO:1990904">
    <property type="term" value="C:ribonucleoprotein complex"/>
    <property type="evidence" value="ECO:0007669"/>
    <property type="project" value="UniProtKB-KW"/>
</dbReference>
<dbReference type="GO" id="GO:0005840">
    <property type="term" value="C:ribosome"/>
    <property type="evidence" value="ECO:0007669"/>
    <property type="project" value="UniProtKB-KW"/>
</dbReference>
<dbReference type="GO" id="GO:0019843">
    <property type="term" value="F:rRNA binding"/>
    <property type="evidence" value="ECO:0007669"/>
    <property type="project" value="UniProtKB-UniRule"/>
</dbReference>
<dbReference type="GO" id="GO:0003735">
    <property type="term" value="F:structural constituent of ribosome"/>
    <property type="evidence" value="ECO:0007669"/>
    <property type="project" value="InterPro"/>
</dbReference>
<dbReference type="GO" id="GO:0000027">
    <property type="term" value="P:ribosomal large subunit assembly"/>
    <property type="evidence" value="ECO:0007669"/>
    <property type="project" value="UniProtKB-UniRule"/>
</dbReference>
<dbReference type="GO" id="GO:0006412">
    <property type="term" value="P:translation"/>
    <property type="evidence" value="ECO:0007669"/>
    <property type="project" value="InterPro"/>
</dbReference>
<dbReference type="CDD" id="cd07026">
    <property type="entry name" value="Ribosomal_L20"/>
    <property type="match status" value="1"/>
</dbReference>
<dbReference type="FunFam" id="1.10.1900.20:FF:000001">
    <property type="entry name" value="50S ribosomal protein L20"/>
    <property type="match status" value="1"/>
</dbReference>
<dbReference type="Gene3D" id="6.10.160.10">
    <property type="match status" value="1"/>
</dbReference>
<dbReference type="Gene3D" id="1.10.1900.20">
    <property type="entry name" value="Ribosomal protein L20"/>
    <property type="match status" value="1"/>
</dbReference>
<dbReference type="HAMAP" id="MF_00382">
    <property type="entry name" value="Ribosomal_bL20"/>
    <property type="match status" value="1"/>
</dbReference>
<dbReference type="InterPro" id="IPR005813">
    <property type="entry name" value="Ribosomal_bL20"/>
</dbReference>
<dbReference type="InterPro" id="IPR049946">
    <property type="entry name" value="RIBOSOMAL_L20_CS"/>
</dbReference>
<dbReference type="InterPro" id="IPR035566">
    <property type="entry name" value="Ribosomal_protein_bL20_C"/>
</dbReference>
<dbReference type="NCBIfam" id="TIGR01032">
    <property type="entry name" value="rplT_bact"/>
    <property type="match status" value="1"/>
</dbReference>
<dbReference type="PANTHER" id="PTHR10986">
    <property type="entry name" value="39S RIBOSOMAL PROTEIN L20"/>
    <property type="match status" value="1"/>
</dbReference>
<dbReference type="Pfam" id="PF00453">
    <property type="entry name" value="Ribosomal_L20"/>
    <property type="match status" value="1"/>
</dbReference>
<dbReference type="PRINTS" id="PR00062">
    <property type="entry name" value="RIBOSOMALL20"/>
</dbReference>
<dbReference type="SUPFAM" id="SSF74731">
    <property type="entry name" value="Ribosomal protein L20"/>
    <property type="match status" value="1"/>
</dbReference>
<dbReference type="PROSITE" id="PS00937">
    <property type="entry name" value="RIBOSOMAL_L20"/>
    <property type="match status" value="1"/>
</dbReference>
<proteinExistence type="evidence at protein level"/>
<organism>
    <name type="scientific">Thermus thermophilus (strain ATCC BAA-163 / DSM 7039 / HB27)</name>
    <dbReference type="NCBI Taxonomy" id="262724"/>
    <lineage>
        <taxon>Bacteria</taxon>
        <taxon>Thermotogati</taxon>
        <taxon>Deinococcota</taxon>
        <taxon>Deinococci</taxon>
        <taxon>Thermales</taxon>
        <taxon>Thermaceae</taxon>
        <taxon>Thermus</taxon>
    </lineage>
</organism>
<sequence length="118" mass="13743">MPRAKTGVVRRRKHKKILKLAKGYWGLRSKSFRKARETLFAAGNYAYAHRKRRKRDFRRLWIVRINAACRQHGLNYSTFIHGLKKAGIEVDRKNLADLAVREPQVFAELVERAKAAQG</sequence>
<protein>
    <recommendedName>
        <fullName evidence="1">Large ribosomal subunit protein bL20</fullName>
    </recommendedName>
    <alternativeName>
        <fullName evidence="2">50S ribosomal protein L20</fullName>
    </alternativeName>
</protein>
<evidence type="ECO:0000255" key="1">
    <source>
        <dbReference type="HAMAP-Rule" id="MF_00382"/>
    </source>
</evidence>
<evidence type="ECO:0000305" key="2"/>
<evidence type="ECO:0007829" key="3">
    <source>
        <dbReference type="PDB" id="4V67"/>
    </source>
</evidence>
<keyword id="KW-0002">3D-structure</keyword>
<keyword id="KW-0687">Ribonucleoprotein</keyword>
<keyword id="KW-0689">Ribosomal protein</keyword>
<keyword id="KW-0694">RNA-binding</keyword>
<keyword id="KW-0699">rRNA-binding</keyword>